<name>ACCD_ECODH</name>
<protein>
    <recommendedName>
        <fullName evidence="1">Acetyl-coenzyme A carboxylase carboxyl transferase subunit beta</fullName>
        <shortName evidence="1">ACCase subunit beta</shortName>
        <shortName evidence="1">Acetyl-CoA carboxylase carboxyltransferase subunit beta</shortName>
        <ecNumber evidence="1">2.1.3.15</ecNumber>
    </recommendedName>
</protein>
<reference key="1">
    <citation type="journal article" date="2008" name="J. Bacteriol.">
        <title>The complete genome sequence of Escherichia coli DH10B: insights into the biology of a laboratory workhorse.</title>
        <authorList>
            <person name="Durfee T."/>
            <person name="Nelson R."/>
            <person name="Baldwin S."/>
            <person name="Plunkett G. III"/>
            <person name="Burland V."/>
            <person name="Mau B."/>
            <person name="Petrosino J.F."/>
            <person name="Qin X."/>
            <person name="Muzny D.M."/>
            <person name="Ayele M."/>
            <person name="Gibbs R.A."/>
            <person name="Csorgo B."/>
            <person name="Posfai G."/>
            <person name="Weinstock G.M."/>
            <person name="Blattner F.R."/>
        </authorList>
    </citation>
    <scope>NUCLEOTIDE SEQUENCE [LARGE SCALE GENOMIC DNA]</scope>
    <source>
        <strain>K12 / DH10B</strain>
    </source>
</reference>
<dbReference type="EC" id="2.1.3.15" evidence="1"/>
<dbReference type="EMBL" id="CP000948">
    <property type="protein sequence ID" value="ACB03474.1"/>
    <property type="molecule type" value="Genomic_DNA"/>
</dbReference>
<dbReference type="RefSeq" id="WP_000118404.1">
    <property type="nucleotide sequence ID" value="NC_010473.1"/>
</dbReference>
<dbReference type="SMR" id="B1X927"/>
<dbReference type="GeneID" id="75202601"/>
<dbReference type="KEGG" id="ecd:ECDH10B_2478"/>
<dbReference type="HOGENOM" id="CLU_015486_1_0_6"/>
<dbReference type="UniPathway" id="UPA00655">
    <property type="reaction ID" value="UER00711"/>
</dbReference>
<dbReference type="GO" id="GO:0009329">
    <property type="term" value="C:acetate CoA-transferase complex"/>
    <property type="evidence" value="ECO:0007669"/>
    <property type="project" value="TreeGrafter"/>
</dbReference>
<dbReference type="GO" id="GO:0003989">
    <property type="term" value="F:acetyl-CoA carboxylase activity"/>
    <property type="evidence" value="ECO:0007669"/>
    <property type="project" value="InterPro"/>
</dbReference>
<dbReference type="GO" id="GO:0005524">
    <property type="term" value="F:ATP binding"/>
    <property type="evidence" value="ECO:0007669"/>
    <property type="project" value="UniProtKB-KW"/>
</dbReference>
<dbReference type="GO" id="GO:0016743">
    <property type="term" value="F:carboxyl- or carbamoyltransferase activity"/>
    <property type="evidence" value="ECO:0007669"/>
    <property type="project" value="UniProtKB-UniRule"/>
</dbReference>
<dbReference type="GO" id="GO:0008270">
    <property type="term" value="F:zinc ion binding"/>
    <property type="evidence" value="ECO:0007669"/>
    <property type="project" value="UniProtKB-UniRule"/>
</dbReference>
<dbReference type="GO" id="GO:0006633">
    <property type="term" value="P:fatty acid biosynthetic process"/>
    <property type="evidence" value="ECO:0007669"/>
    <property type="project" value="UniProtKB-KW"/>
</dbReference>
<dbReference type="GO" id="GO:2001295">
    <property type="term" value="P:malonyl-CoA biosynthetic process"/>
    <property type="evidence" value="ECO:0007669"/>
    <property type="project" value="UniProtKB-UniRule"/>
</dbReference>
<dbReference type="FunFam" id="3.90.226.10:FF:000013">
    <property type="entry name" value="Acetyl-coenzyme A carboxylase carboxyl transferase subunit beta"/>
    <property type="match status" value="1"/>
</dbReference>
<dbReference type="Gene3D" id="3.90.226.10">
    <property type="entry name" value="2-enoyl-CoA Hydratase, Chain A, domain 1"/>
    <property type="match status" value="1"/>
</dbReference>
<dbReference type="HAMAP" id="MF_01395">
    <property type="entry name" value="AcetylCoA_CT_beta"/>
    <property type="match status" value="1"/>
</dbReference>
<dbReference type="InterPro" id="IPR034733">
    <property type="entry name" value="AcCoA_carboxyl_beta"/>
</dbReference>
<dbReference type="InterPro" id="IPR000438">
    <property type="entry name" value="Acetyl_CoA_COase_Trfase_b_su"/>
</dbReference>
<dbReference type="InterPro" id="IPR029045">
    <property type="entry name" value="ClpP/crotonase-like_dom_sf"/>
</dbReference>
<dbReference type="InterPro" id="IPR011762">
    <property type="entry name" value="COA_CT_N"/>
</dbReference>
<dbReference type="InterPro" id="IPR041010">
    <property type="entry name" value="Znf-ACC"/>
</dbReference>
<dbReference type="NCBIfam" id="TIGR00515">
    <property type="entry name" value="accD"/>
    <property type="match status" value="1"/>
</dbReference>
<dbReference type="PANTHER" id="PTHR42995">
    <property type="entry name" value="ACETYL-COENZYME A CARBOXYLASE CARBOXYL TRANSFERASE SUBUNIT BETA, CHLOROPLASTIC"/>
    <property type="match status" value="1"/>
</dbReference>
<dbReference type="PANTHER" id="PTHR42995:SF5">
    <property type="entry name" value="ACETYL-COENZYME A CARBOXYLASE CARBOXYL TRANSFERASE SUBUNIT BETA, CHLOROPLASTIC"/>
    <property type="match status" value="1"/>
</dbReference>
<dbReference type="Pfam" id="PF01039">
    <property type="entry name" value="Carboxyl_trans"/>
    <property type="match status" value="1"/>
</dbReference>
<dbReference type="Pfam" id="PF17848">
    <property type="entry name" value="Zn_ribbon_ACC"/>
    <property type="match status" value="1"/>
</dbReference>
<dbReference type="PRINTS" id="PR01070">
    <property type="entry name" value="ACCCTRFRASEB"/>
</dbReference>
<dbReference type="SUPFAM" id="SSF52096">
    <property type="entry name" value="ClpP/crotonase"/>
    <property type="match status" value="1"/>
</dbReference>
<dbReference type="PROSITE" id="PS50980">
    <property type="entry name" value="COA_CT_NTER"/>
    <property type="match status" value="1"/>
</dbReference>
<sequence>MSWIERIKSNITPTRKASIPEGVWTKCDSCGQVLYRAELERNLEVCPKCDHHMRMTARNRLHSLLDEGSLVELGSELEPKDVLKFRDSKKYKDRLASAQKETGEKDALVVMKGTLYGMPVVAAAFEFAFMGGSMGSVVGARFVRAVEQALEDNCPLICFSASGGARMQEALMSLMQMAKTSAALAKMQERGLPYISVLTDPTMGGVSASFAMLGDLNIAEPKALIGFAGPRVIEQTVREKLPPGFQRSEFLIEKGAIDMIVRRPEMRLKLASILAKLMNLPAPNPEAPREGVVVPPVPDQEPEA</sequence>
<accession>B1X927</accession>
<proteinExistence type="inferred from homology"/>
<feature type="chain" id="PRO_0000358986" description="Acetyl-coenzyme A carboxylase carboxyl transferase subunit beta">
    <location>
        <begin position="1"/>
        <end position="304"/>
    </location>
</feature>
<feature type="domain" description="CoA carboxyltransferase N-terminal" evidence="2">
    <location>
        <begin position="23"/>
        <end position="292"/>
    </location>
</feature>
<feature type="zinc finger region" description="C4-type" evidence="1">
    <location>
        <begin position="27"/>
        <end position="49"/>
    </location>
</feature>
<feature type="region of interest" description="Disordered" evidence="3">
    <location>
        <begin position="284"/>
        <end position="304"/>
    </location>
</feature>
<feature type="compositionally biased region" description="Pro residues" evidence="3">
    <location>
        <begin position="295"/>
        <end position="304"/>
    </location>
</feature>
<feature type="binding site" evidence="1">
    <location>
        <position position="27"/>
    </location>
    <ligand>
        <name>Zn(2+)</name>
        <dbReference type="ChEBI" id="CHEBI:29105"/>
    </ligand>
</feature>
<feature type="binding site" evidence="1">
    <location>
        <position position="30"/>
    </location>
    <ligand>
        <name>Zn(2+)</name>
        <dbReference type="ChEBI" id="CHEBI:29105"/>
    </ligand>
</feature>
<feature type="binding site" evidence="1">
    <location>
        <position position="46"/>
    </location>
    <ligand>
        <name>Zn(2+)</name>
        <dbReference type="ChEBI" id="CHEBI:29105"/>
    </ligand>
</feature>
<feature type="binding site" evidence="1">
    <location>
        <position position="49"/>
    </location>
    <ligand>
        <name>Zn(2+)</name>
        <dbReference type="ChEBI" id="CHEBI:29105"/>
    </ligand>
</feature>
<organism>
    <name type="scientific">Escherichia coli (strain K12 / DH10B)</name>
    <dbReference type="NCBI Taxonomy" id="316385"/>
    <lineage>
        <taxon>Bacteria</taxon>
        <taxon>Pseudomonadati</taxon>
        <taxon>Pseudomonadota</taxon>
        <taxon>Gammaproteobacteria</taxon>
        <taxon>Enterobacterales</taxon>
        <taxon>Enterobacteriaceae</taxon>
        <taxon>Escherichia</taxon>
    </lineage>
</organism>
<evidence type="ECO:0000255" key="1">
    <source>
        <dbReference type="HAMAP-Rule" id="MF_01395"/>
    </source>
</evidence>
<evidence type="ECO:0000255" key="2">
    <source>
        <dbReference type="PROSITE-ProRule" id="PRU01136"/>
    </source>
</evidence>
<evidence type="ECO:0000256" key="3">
    <source>
        <dbReference type="SAM" id="MobiDB-lite"/>
    </source>
</evidence>
<keyword id="KW-0067">ATP-binding</keyword>
<keyword id="KW-0963">Cytoplasm</keyword>
<keyword id="KW-0275">Fatty acid biosynthesis</keyword>
<keyword id="KW-0276">Fatty acid metabolism</keyword>
<keyword id="KW-0444">Lipid biosynthesis</keyword>
<keyword id="KW-0443">Lipid metabolism</keyword>
<keyword id="KW-0479">Metal-binding</keyword>
<keyword id="KW-0547">Nucleotide-binding</keyword>
<keyword id="KW-0808">Transferase</keyword>
<keyword id="KW-0862">Zinc</keyword>
<keyword id="KW-0863">Zinc-finger</keyword>
<gene>
    <name evidence="1" type="primary">accD</name>
    <name type="ordered locus">ECDH10B_2478</name>
</gene>
<comment type="function">
    <text evidence="1">Component of the acetyl coenzyme A carboxylase (ACC) complex. Biotin carboxylase (BC) catalyzes the carboxylation of biotin on its carrier protein (BCCP) and then the CO(2) group is transferred by the transcarboxylase to acetyl-CoA to form malonyl-CoA.</text>
</comment>
<comment type="catalytic activity">
    <reaction evidence="1">
        <text>N(6)-carboxybiotinyl-L-lysyl-[protein] + acetyl-CoA = N(6)-biotinyl-L-lysyl-[protein] + malonyl-CoA</text>
        <dbReference type="Rhea" id="RHEA:54728"/>
        <dbReference type="Rhea" id="RHEA-COMP:10505"/>
        <dbReference type="Rhea" id="RHEA-COMP:10506"/>
        <dbReference type="ChEBI" id="CHEBI:57288"/>
        <dbReference type="ChEBI" id="CHEBI:57384"/>
        <dbReference type="ChEBI" id="CHEBI:83144"/>
        <dbReference type="ChEBI" id="CHEBI:83145"/>
        <dbReference type="EC" id="2.1.3.15"/>
    </reaction>
</comment>
<comment type="cofactor">
    <cofactor evidence="1">
        <name>Zn(2+)</name>
        <dbReference type="ChEBI" id="CHEBI:29105"/>
    </cofactor>
    <text evidence="1">Binds 1 zinc ion per subunit.</text>
</comment>
<comment type="pathway">
    <text evidence="1">Lipid metabolism; malonyl-CoA biosynthesis; malonyl-CoA from acetyl-CoA: step 1/1.</text>
</comment>
<comment type="subunit">
    <text evidence="1">Acetyl-CoA carboxylase is a heterohexamer composed of biotin carboxyl carrier protein (AccB), biotin carboxylase (AccC) and two subunits each of ACCase subunit alpha (AccA) and ACCase subunit beta (AccD).</text>
</comment>
<comment type="subcellular location">
    <subcellularLocation>
        <location evidence="1">Cytoplasm</location>
    </subcellularLocation>
</comment>
<comment type="similarity">
    <text evidence="1">Belongs to the AccD/PCCB family.</text>
</comment>